<organism>
    <name type="scientific">Sulfurovum sp. (strain NBC37-1)</name>
    <dbReference type="NCBI Taxonomy" id="387093"/>
    <lineage>
        <taxon>Bacteria</taxon>
        <taxon>Pseudomonadati</taxon>
        <taxon>Campylobacterota</taxon>
        <taxon>Epsilonproteobacteria</taxon>
        <taxon>Campylobacterales</taxon>
        <taxon>Sulfurovaceae</taxon>
        <taxon>Sulfurovum</taxon>
    </lineage>
</organism>
<gene>
    <name evidence="1" type="primary">aroA</name>
    <name type="ordered locus">SUN_0549</name>
</gene>
<comment type="function">
    <text evidence="1">Catalyzes the transfer of the enolpyruvyl moiety of phosphoenolpyruvate (PEP) to the 5-hydroxyl of shikimate-3-phosphate (S3P) to produce enolpyruvyl shikimate-3-phosphate and inorganic phosphate.</text>
</comment>
<comment type="catalytic activity">
    <reaction evidence="1">
        <text>3-phosphoshikimate + phosphoenolpyruvate = 5-O-(1-carboxyvinyl)-3-phosphoshikimate + phosphate</text>
        <dbReference type="Rhea" id="RHEA:21256"/>
        <dbReference type="ChEBI" id="CHEBI:43474"/>
        <dbReference type="ChEBI" id="CHEBI:57701"/>
        <dbReference type="ChEBI" id="CHEBI:58702"/>
        <dbReference type="ChEBI" id="CHEBI:145989"/>
        <dbReference type="EC" id="2.5.1.19"/>
    </reaction>
    <physiologicalReaction direction="left-to-right" evidence="1">
        <dbReference type="Rhea" id="RHEA:21257"/>
    </physiologicalReaction>
</comment>
<comment type="pathway">
    <text evidence="1">Metabolic intermediate biosynthesis; chorismate biosynthesis; chorismate from D-erythrose 4-phosphate and phosphoenolpyruvate: step 6/7.</text>
</comment>
<comment type="subunit">
    <text evidence="1">Monomer.</text>
</comment>
<comment type="subcellular location">
    <subcellularLocation>
        <location evidence="1">Cytoplasm</location>
    </subcellularLocation>
</comment>
<comment type="similarity">
    <text evidence="1">Belongs to the EPSP synthase family.</text>
</comment>
<accession>A6Q7Q0</accession>
<name>AROA_SULNB</name>
<proteinExistence type="inferred from homology"/>
<dbReference type="EC" id="2.5.1.19" evidence="1"/>
<dbReference type="EMBL" id="AP009179">
    <property type="protein sequence ID" value="BAF71509.1"/>
    <property type="molecule type" value="Genomic_DNA"/>
</dbReference>
<dbReference type="RefSeq" id="WP_011980242.1">
    <property type="nucleotide sequence ID" value="NC_009663.1"/>
</dbReference>
<dbReference type="SMR" id="A6Q7Q0"/>
<dbReference type="STRING" id="387093.SUN_0549"/>
<dbReference type="KEGG" id="sun:SUN_0549"/>
<dbReference type="eggNOG" id="COG0128">
    <property type="taxonomic scope" value="Bacteria"/>
</dbReference>
<dbReference type="HOGENOM" id="CLU_024321_0_0_7"/>
<dbReference type="OrthoDB" id="9809920at2"/>
<dbReference type="UniPathway" id="UPA00053">
    <property type="reaction ID" value="UER00089"/>
</dbReference>
<dbReference type="Proteomes" id="UP000006378">
    <property type="component" value="Chromosome"/>
</dbReference>
<dbReference type="GO" id="GO:0005737">
    <property type="term" value="C:cytoplasm"/>
    <property type="evidence" value="ECO:0007669"/>
    <property type="project" value="UniProtKB-SubCell"/>
</dbReference>
<dbReference type="GO" id="GO:0003866">
    <property type="term" value="F:3-phosphoshikimate 1-carboxyvinyltransferase activity"/>
    <property type="evidence" value="ECO:0007669"/>
    <property type="project" value="UniProtKB-UniRule"/>
</dbReference>
<dbReference type="GO" id="GO:0008652">
    <property type="term" value="P:amino acid biosynthetic process"/>
    <property type="evidence" value="ECO:0007669"/>
    <property type="project" value="UniProtKB-KW"/>
</dbReference>
<dbReference type="GO" id="GO:0009073">
    <property type="term" value="P:aromatic amino acid family biosynthetic process"/>
    <property type="evidence" value="ECO:0007669"/>
    <property type="project" value="UniProtKB-KW"/>
</dbReference>
<dbReference type="GO" id="GO:0009423">
    <property type="term" value="P:chorismate biosynthetic process"/>
    <property type="evidence" value="ECO:0007669"/>
    <property type="project" value="UniProtKB-UniRule"/>
</dbReference>
<dbReference type="CDD" id="cd01556">
    <property type="entry name" value="EPSP_synthase"/>
    <property type="match status" value="1"/>
</dbReference>
<dbReference type="FunFam" id="3.65.10.10:FF:000003">
    <property type="entry name" value="3-phosphoshikimate 1-carboxyvinyltransferase"/>
    <property type="match status" value="1"/>
</dbReference>
<dbReference type="FunFam" id="3.65.10.10:FF:000004">
    <property type="entry name" value="3-phosphoshikimate 1-carboxyvinyltransferase"/>
    <property type="match status" value="1"/>
</dbReference>
<dbReference type="Gene3D" id="3.65.10.10">
    <property type="entry name" value="Enolpyruvate transferase domain"/>
    <property type="match status" value="2"/>
</dbReference>
<dbReference type="HAMAP" id="MF_00210">
    <property type="entry name" value="EPSP_synth"/>
    <property type="match status" value="1"/>
</dbReference>
<dbReference type="InterPro" id="IPR001986">
    <property type="entry name" value="Enolpyruvate_Tfrase_dom"/>
</dbReference>
<dbReference type="InterPro" id="IPR036968">
    <property type="entry name" value="Enolpyruvate_Tfrase_sf"/>
</dbReference>
<dbReference type="InterPro" id="IPR006264">
    <property type="entry name" value="EPSP_synthase"/>
</dbReference>
<dbReference type="InterPro" id="IPR023193">
    <property type="entry name" value="EPSP_synthase_CS"/>
</dbReference>
<dbReference type="InterPro" id="IPR013792">
    <property type="entry name" value="RNA3'P_cycl/enolpyr_Trfase_a/b"/>
</dbReference>
<dbReference type="NCBIfam" id="TIGR01356">
    <property type="entry name" value="aroA"/>
    <property type="match status" value="1"/>
</dbReference>
<dbReference type="PANTHER" id="PTHR21090">
    <property type="entry name" value="AROM/DEHYDROQUINATE SYNTHASE"/>
    <property type="match status" value="1"/>
</dbReference>
<dbReference type="PANTHER" id="PTHR21090:SF5">
    <property type="entry name" value="PENTAFUNCTIONAL AROM POLYPEPTIDE"/>
    <property type="match status" value="1"/>
</dbReference>
<dbReference type="Pfam" id="PF00275">
    <property type="entry name" value="EPSP_synthase"/>
    <property type="match status" value="1"/>
</dbReference>
<dbReference type="PIRSF" id="PIRSF000505">
    <property type="entry name" value="EPSPS"/>
    <property type="match status" value="1"/>
</dbReference>
<dbReference type="SUPFAM" id="SSF55205">
    <property type="entry name" value="EPT/RTPC-like"/>
    <property type="match status" value="1"/>
</dbReference>
<dbReference type="PROSITE" id="PS00104">
    <property type="entry name" value="EPSP_SYNTHASE_1"/>
    <property type="match status" value="1"/>
</dbReference>
<dbReference type="PROSITE" id="PS00885">
    <property type="entry name" value="EPSP_SYNTHASE_2"/>
    <property type="match status" value="1"/>
</dbReference>
<keyword id="KW-0028">Amino-acid biosynthesis</keyword>
<keyword id="KW-0057">Aromatic amino acid biosynthesis</keyword>
<keyword id="KW-0963">Cytoplasm</keyword>
<keyword id="KW-0808">Transferase</keyword>
<feature type="chain" id="PRO_1000012502" description="3-phosphoshikimate 1-carboxyvinyltransferase">
    <location>
        <begin position="1"/>
        <end position="427"/>
    </location>
</feature>
<feature type="active site" description="Proton acceptor" evidence="1">
    <location>
        <position position="314"/>
    </location>
</feature>
<feature type="binding site" evidence="1">
    <location>
        <position position="22"/>
    </location>
    <ligand>
        <name>3-phosphoshikimate</name>
        <dbReference type="ChEBI" id="CHEBI:145989"/>
    </ligand>
</feature>
<feature type="binding site" evidence="1">
    <location>
        <position position="22"/>
    </location>
    <ligand>
        <name>phosphoenolpyruvate</name>
        <dbReference type="ChEBI" id="CHEBI:58702"/>
    </ligand>
</feature>
<feature type="binding site" evidence="1">
    <location>
        <position position="23"/>
    </location>
    <ligand>
        <name>3-phosphoshikimate</name>
        <dbReference type="ChEBI" id="CHEBI:145989"/>
    </ligand>
</feature>
<feature type="binding site" evidence="1">
    <location>
        <position position="27"/>
    </location>
    <ligand>
        <name>3-phosphoshikimate</name>
        <dbReference type="ChEBI" id="CHEBI:145989"/>
    </ligand>
</feature>
<feature type="binding site" evidence="1">
    <location>
        <position position="96"/>
    </location>
    <ligand>
        <name>phosphoenolpyruvate</name>
        <dbReference type="ChEBI" id="CHEBI:58702"/>
    </ligand>
</feature>
<feature type="binding site" evidence="1">
    <location>
        <position position="124"/>
    </location>
    <ligand>
        <name>phosphoenolpyruvate</name>
        <dbReference type="ChEBI" id="CHEBI:58702"/>
    </ligand>
</feature>
<feature type="binding site" evidence="1">
    <location>
        <position position="170"/>
    </location>
    <ligand>
        <name>3-phosphoshikimate</name>
        <dbReference type="ChEBI" id="CHEBI:145989"/>
    </ligand>
</feature>
<feature type="binding site" evidence="1">
    <location>
        <position position="171"/>
    </location>
    <ligand>
        <name>3-phosphoshikimate</name>
        <dbReference type="ChEBI" id="CHEBI:145989"/>
    </ligand>
</feature>
<feature type="binding site" evidence="1">
    <location>
        <position position="172"/>
    </location>
    <ligand>
        <name>3-phosphoshikimate</name>
        <dbReference type="ChEBI" id="CHEBI:145989"/>
    </ligand>
</feature>
<feature type="binding site" evidence="1">
    <location>
        <position position="172"/>
    </location>
    <ligand>
        <name>phosphoenolpyruvate</name>
        <dbReference type="ChEBI" id="CHEBI:58702"/>
    </ligand>
</feature>
<feature type="binding site" evidence="1">
    <location>
        <position position="198"/>
    </location>
    <ligand>
        <name>3-phosphoshikimate</name>
        <dbReference type="ChEBI" id="CHEBI:145989"/>
    </ligand>
</feature>
<feature type="binding site" evidence="1">
    <location>
        <position position="314"/>
    </location>
    <ligand>
        <name>3-phosphoshikimate</name>
        <dbReference type="ChEBI" id="CHEBI:145989"/>
    </ligand>
</feature>
<feature type="binding site" evidence="1">
    <location>
        <position position="337"/>
    </location>
    <ligand>
        <name>3-phosphoshikimate</name>
        <dbReference type="ChEBI" id="CHEBI:145989"/>
    </ligand>
</feature>
<feature type="binding site" evidence="1">
    <location>
        <position position="341"/>
    </location>
    <ligand>
        <name>3-phosphoshikimate</name>
        <dbReference type="ChEBI" id="CHEBI:145989"/>
    </ligand>
</feature>
<feature type="binding site" evidence="1">
    <location>
        <position position="345"/>
    </location>
    <ligand>
        <name>phosphoenolpyruvate</name>
        <dbReference type="ChEBI" id="CHEBI:58702"/>
    </ligand>
</feature>
<feature type="binding site" evidence="1">
    <location>
        <position position="387"/>
    </location>
    <ligand>
        <name>phosphoenolpyruvate</name>
        <dbReference type="ChEBI" id="CHEBI:58702"/>
    </ligand>
</feature>
<feature type="binding site" evidence="1">
    <location>
        <position position="412"/>
    </location>
    <ligand>
        <name>phosphoenolpyruvate</name>
        <dbReference type="ChEBI" id="CHEBI:58702"/>
    </ligand>
</feature>
<reference key="1">
    <citation type="journal article" date="2007" name="Proc. Natl. Acad. Sci. U.S.A.">
        <title>Deep-sea vent epsilon-proteobacterial genomes provide insights into emergence of pathogens.</title>
        <authorList>
            <person name="Nakagawa S."/>
            <person name="Takaki Y."/>
            <person name="Shimamura S."/>
            <person name="Reysenbach A.-L."/>
            <person name="Takai K."/>
            <person name="Horikoshi K."/>
        </authorList>
    </citation>
    <scope>NUCLEOTIDE SEQUENCE [LARGE SCALE GENOMIC DNA]</scope>
    <source>
        <strain>NBC37-1</strain>
    </source>
</reference>
<protein>
    <recommendedName>
        <fullName evidence="1">3-phosphoshikimate 1-carboxyvinyltransferase</fullName>
        <ecNumber evidence="1">2.5.1.19</ecNumber>
    </recommendedName>
    <alternativeName>
        <fullName evidence="1">5-enolpyruvylshikimate-3-phosphate synthase</fullName>
        <shortName evidence="1">EPSP synthase</shortName>
        <shortName evidence="1">EPSPS</shortName>
    </alternativeName>
</protein>
<sequence length="427" mass="46608">MNSITLKPIRYIEGEVNLPGSKSLSNRALLIAALAEGTTRITNLLESDDTRHMLNALKLLGVEYTLSEDRTECTVVGNGGPFHTKEPLELFLGNAGTAMRPLCAALTLGSGTYVLTGEPRMKERPIGHLVDALREAGAKITYLENEGYPPLKIEADGLKGGEVRIDGSISSQFLTALLMAAPMARGDMQIDIVGELVSKPYIDITLHIMKQFGVEVRNENYERFFIKGGQIYQALETFMVEGDASSASYFLAAAAIKGGTVKVTGIGKTSVQGDVAFADVLEKMGAKVEWGDDYVSVSRGELNAVNMDFNHIPDAAMTIATTALFAKGTTTLRNIYNWRVKETDRLHAMAMELRKVGAKVEEGEDYLTITPPVQLKHAAIDTYDDHRMAMCFSLLALDPVSVTINEPECTAKTFPTYFEVLESISSY</sequence>
<evidence type="ECO:0000255" key="1">
    <source>
        <dbReference type="HAMAP-Rule" id="MF_00210"/>
    </source>
</evidence>